<name>DNLI_ANASK</name>
<keyword id="KW-0067">ATP-binding</keyword>
<keyword id="KW-0131">Cell cycle</keyword>
<keyword id="KW-0132">Cell division</keyword>
<keyword id="KW-0227">DNA damage</keyword>
<keyword id="KW-0233">DNA recombination</keyword>
<keyword id="KW-0234">DNA repair</keyword>
<keyword id="KW-0235">DNA replication</keyword>
<keyword id="KW-0436">Ligase</keyword>
<keyword id="KW-0460">Magnesium</keyword>
<keyword id="KW-0479">Metal-binding</keyword>
<keyword id="KW-0547">Nucleotide-binding</keyword>
<proteinExistence type="inferred from homology"/>
<protein>
    <recommendedName>
        <fullName evidence="1">Probable DNA ligase</fullName>
        <ecNumber evidence="1">6.5.1.1</ecNumber>
    </recommendedName>
    <alternativeName>
        <fullName evidence="1">Polydeoxyribonucleotide synthase [ATP]</fullName>
    </alternativeName>
</protein>
<evidence type="ECO:0000255" key="1">
    <source>
        <dbReference type="HAMAP-Rule" id="MF_00407"/>
    </source>
</evidence>
<reference key="1">
    <citation type="submission" date="2008-08" db="EMBL/GenBank/DDBJ databases">
        <title>Complete sequence of Anaeromyxobacter sp. K.</title>
        <authorList>
            <consortium name="US DOE Joint Genome Institute"/>
            <person name="Lucas S."/>
            <person name="Copeland A."/>
            <person name="Lapidus A."/>
            <person name="Glavina del Rio T."/>
            <person name="Dalin E."/>
            <person name="Tice H."/>
            <person name="Bruce D."/>
            <person name="Goodwin L."/>
            <person name="Pitluck S."/>
            <person name="Saunders E."/>
            <person name="Brettin T."/>
            <person name="Detter J.C."/>
            <person name="Han C."/>
            <person name="Larimer F."/>
            <person name="Land M."/>
            <person name="Hauser L."/>
            <person name="Kyrpides N."/>
            <person name="Ovchinnikiva G."/>
            <person name="Beliaev A."/>
        </authorList>
    </citation>
    <scope>NUCLEOTIDE SEQUENCE [LARGE SCALE GENOMIC DNA]</scope>
    <source>
        <strain>K</strain>
    </source>
</reference>
<accession>B4UIS1</accession>
<dbReference type="EC" id="6.5.1.1" evidence="1"/>
<dbReference type="EMBL" id="CP001131">
    <property type="protein sequence ID" value="ACG75493.1"/>
    <property type="molecule type" value="Genomic_DNA"/>
</dbReference>
<dbReference type="RefSeq" id="WP_012528245.1">
    <property type="nucleotide sequence ID" value="NC_011145.1"/>
</dbReference>
<dbReference type="SMR" id="B4UIS1"/>
<dbReference type="KEGG" id="ank:AnaeK_4290"/>
<dbReference type="HOGENOM" id="CLU_005138_6_1_7"/>
<dbReference type="OrthoDB" id="9767858at2"/>
<dbReference type="Proteomes" id="UP000001871">
    <property type="component" value="Chromosome"/>
</dbReference>
<dbReference type="GO" id="GO:0005524">
    <property type="term" value="F:ATP binding"/>
    <property type="evidence" value="ECO:0007669"/>
    <property type="project" value="UniProtKB-UniRule"/>
</dbReference>
<dbReference type="GO" id="GO:0003677">
    <property type="term" value="F:DNA binding"/>
    <property type="evidence" value="ECO:0007669"/>
    <property type="project" value="InterPro"/>
</dbReference>
<dbReference type="GO" id="GO:0003910">
    <property type="term" value="F:DNA ligase (ATP) activity"/>
    <property type="evidence" value="ECO:0007669"/>
    <property type="project" value="UniProtKB-UniRule"/>
</dbReference>
<dbReference type="GO" id="GO:0046872">
    <property type="term" value="F:metal ion binding"/>
    <property type="evidence" value="ECO:0007669"/>
    <property type="project" value="UniProtKB-KW"/>
</dbReference>
<dbReference type="GO" id="GO:0051301">
    <property type="term" value="P:cell division"/>
    <property type="evidence" value="ECO:0007669"/>
    <property type="project" value="UniProtKB-KW"/>
</dbReference>
<dbReference type="GO" id="GO:0071897">
    <property type="term" value="P:DNA biosynthetic process"/>
    <property type="evidence" value="ECO:0007669"/>
    <property type="project" value="InterPro"/>
</dbReference>
<dbReference type="GO" id="GO:0006310">
    <property type="term" value="P:DNA recombination"/>
    <property type="evidence" value="ECO:0007669"/>
    <property type="project" value="UniProtKB-UniRule"/>
</dbReference>
<dbReference type="GO" id="GO:0006281">
    <property type="term" value="P:DNA repair"/>
    <property type="evidence" value="ECO:0007669"/>
    <property type="project" value="UniProtKB-UniRule"/>
</dbReference>
<dbReference type="GO" id="GO:0006260">
    <property type="term" value="P:DNA replication"/>
    <property type="evidence" value="ECO:0007669"/>
    <property type="project" value="UniProtKB-UniRule"/>
</dbReference>
<dbReference type="CDD" id="cd07901">
    <property type="entry name" value="Adenylation_DNA_ligase_Arch_LigB"/>
    <property type="match status" value="1"/>
</dbReference>
<dbReference type="CDD" id="cd07972">
    <property type="entry name" value="OBF_DNA_ligase_Arch_LigB"/>
    <property type="match status" value="1"/>
</dbReference>
<dbReference type="FunFam" id="2.40.50.140:FF:000163">
    <property type="entry name" value="Probable DNA ligase"/>
    <property type="match status" value="1"/>
</dbReference>
<dbReference type="Gene3D" id="1.10.3260.10">
    <property type="entry name" value="DNA ligase, ATP-dependent, N-terminal domain"/>
    <property type="match status" value="1"/>
</dbReference>
<dbReference type="Gene3D" id="3.30.470.30">
    <property type="entry name" value="DNA ligase/mRNA capping enzyme"/>
    <property type="match status" value="1"/>
</dbReference>
<dbReference type="Gene3D" id="2.40.50.140">
    <property type="entry name" value="Nucleic acid-binding proteins"/>
    <property type="match status" value="1"/>
</dbReference>
<dbReference type="HAMAP" id="MF_00407">
    <property type="entry name" value="DNA_ligase"/>
    <property type="match status" value="1"/>
</dbReference>
<dbReference type="InterPro" id="IPR050191">
    <property type="entry name" value="ATP-dep_DNA_ligase"/>
</dbReference>
<dbReference type="InterPro" id="IPR022865">
    <property type="entry name" value="DNA_ligae_ATP-dep_bac/arc"/>
</dbReference>
<dbReference type="InterPro" id="IPR000977">
    <property type="entry name" value="DNA_ligase_ATP-dep"/>
</dbReference>
<dbReference type="InterPro" id="IPR012309">
    <property type="entry name" value="DNA_ligase_ATP-dep_C"/>
</dbReference>
<dbReference type="InterPro" id="IPR012310">
    <property type="entry name" value="DNA_ligase_ATP-dep_cent"/>
</dbReference>
<dbReference type="InterPro" id="IPR016059">
    <property type="entry name" value="DNA_ligase_ATP-dep_CS"/>
</dbReference>
<dbReference type="InterPro" id="IPR012308">
    <property type="entry name" value="DNA_ligase_ATP-dep_N"/>
</dbReference>
<dbReference type="InterPro" id="IPR036599">
    <property type="entry name" value="DNA_ligase_N_sf"/>
</dbReference>
<dbReference type="InterPro" id="IPR012340">
    <property type="entry name" value="NA-bd_OB-fold"/>
</dbReference>
<dbReference type="NCBIfam" id="TIGR00574">
    <property type="entry name" value="dnl1"/>
    <property type="match status" value="1"/>
</dbReference>
<dbReference type="NCBIfam" id="NF002868">
    <property type="entry name" value="PRK03180.1"/>
    <property type="match status" value="1"/>
</dbReference>
<dbReference type="PANTHER" id="PTHR45674">
    <property type="entry name" value="DNA LIGASE 1/3 FAMILY MEMBER"/>
    <property type="match status" value="1"/>
</dbReference>
<dbReference type="PANTHER" id="PTHR45674:SF13">
    <property type="entry name" value="DNA LIGASE-RELATED"/>
    <property type="match status" value="1"/>
</dbReference>
<dbReference type="Pfam" id="PF04679">
    <property type="entry name" value="DNA_ligase_A_C"/>
    <property type="match status" value="1"/>
</dbReference>
<dbReference type="Pfam" id="PF01068">
    <property type="entry name" value="DNA_ligase_A_M"/>
    <property type="match status" value="1"/>
</dbReference>
<dbReference type="Pfam" id="PF04675">
    <property type="entry name" value="DNA_ligase_A_N"/>
    <property type="match status" value="1"/>
</dbReference>
<dbReference type="SUPFAM" id="SSF117018">
    <property type="entry name" value="ATP-dependent DNA ligase DNA-binding domain"/>
    <property type="match status" value="1"/>
</dbReference>
<dbReference type="SUPFAM" id="SSF56091">
    <property type="entry name" value="DNA ligase/mRNA capping enzyme, catalytic domain"/>
    <property type="match status" value="1"/>
</dbReference>
<dbReference type="SUPFAM" id="SSF50249">
    <property type="entry name" value="Nucleic acid-binding proteins"/>
    <property type="match status" value="1"/>
</dbReference>
<dbReference type="PROSITE" id="PS00697">
    <property type="entry name" value="DNA_LIGASE_A1"/>
    <property type="match status" value="1"/>
</dbReference>
<dbReference type="PROSITE" id="PS00333">
    <property type="entry name" value="DNA_LIGASE_A2"/>
    <property type="match status" value="1"/>
</dbReference>
<dbReference type="PROSITE" id="PS50160">
    <property type="entry name" value="DNA_LIGASE_A3"/>
    <property type="match status" value="1"/>
</dbReference>
<feature type="chain" id="PRO_0000365218" description="Probable DNA ligase">
    <location>
        <begin position="1"/>
        <end position="513"/>
    </location>
</feature>
<feature type="active site" description="N6-AMP-lysine intermediate" evidence="1">
    <location>
        <position position="215"/>
    </location>
</feature>
<feature type="binding site" evidence="1">
    <location>
        <position position="213"/>
    </location>
    <ligand>
        <name>ATP</name>
        <dbReference type="ChEBI" id="CHEBI:30616"/>
    </ligand>
</feature>
<feature type="binding site" evidence="1">
    <location>
        <position position="220"/>
    </location>
    <ligand>
        <name>ATP</name>
        <dbReference type="ChEBI" id="CHEBI:30616"/>
    </ligand>
</feature>
<feature type="binding site" evidence="1">
    <location>
        <position position="235"/>
    </location>
    <ligand>
        <name>ATP</name>
        <dbReference type="ChEBI" id="CHEBI:30616"/>
    </ligand>
</feature>
<feature type="binding site" evidence="1">
    <location>
        <position position="264"/>
    </location>
    <ligand>
        <name>ATP</name>
        <dbReference type="ChEBI" id="CHEBI:30616"/>
    </ligand>
</feature>
<feature type="binding site" evidence="1">
    <location>
        <position position="304"/>
    </location>
    <ligand>
        <name>ATP</name>
        <dbReference type="ChEBI" id="CHEBI:30616"/>
    </ligand>
</feature>
<feature type="binding site" evidence="1">
    <location>
        <position position="376"/>
    </location>
    <ligand>
        <name>ATP</name>
        <dbReference type="ChEBI" id="CHEBI:30616"/>
    </ligand>
</feature>
<feature type="binding site" evidence="1">
    <location>
        <position position="382"/>
    </location>
    <ligand>
        <name>ATP</name>
        <dbReference type="ChEBI" id="CHEBI:30616"/>
    </ligand>
</feature>
<comment type="function">
    <text evidence="1">DNA ligase that seals nicks in double-stranded DNA during DNA replication, DNA recombination and DNA repair.</text>
</comment>
<comment type="catalytic activity">
    <reaction evidence="1">
        <text>ATP + (deoxyribonucleotide)n-3'-hydroxyl + 5'-phospho-(deoxyribonucleotide)m = (deoxyribonucleotide)n+m + AMP + diphosphate.</text>
        <dbReference type="EC" id="6.5.1.1"/>
    </reaction>
</comment>
<comment type="cofactor">
    <cofactor evidence="1">
        <name>Mg(2+)</name>
        <dbReference type="ChEBI" id="CHEBI:18420"/>
    </cofactor>
</comment>
<comment type="similarity">
    <text evidence="1">Belongs to the ATP-dependent DNA ligase family.</text>
</comment>
<sequence>MLLAELAEVSRAVAATPARLEKVALLSEALRRLAPDERAVGASWLAGDLAGGRVGIGAATLRAALEAAPPGAAGPGLTVGEVDAALRRIAAAAGPGSGAARRRELDALLARAGDPERRFLAALVLGELRQGALEGVLSDAVARVAGLPGAEVRRAAMLAGALPPVAEAALAEGAAGLARFRLRVGEPVSPMLAQTAAGVDEALRALGGEAALEWKLDGARIQAHRDGDEVRVFSRSLREVTAAVPEVVALLRAAPEPLLVLDGEAIALRADGTPEPFQVTMRRFGRKLDVERLAPDLPLTAFFFDALVAGGGELLGAPERERWAALERAIPAERRVPRLVTGDAAEARAFLEEALARGQEGVVAKALDAPYEAGRRGAAWLKVKRAHTLDLVVLAAEWGSGRRRGWLSNLHLGARDPATGEFVMLGKTFKGMTDAMLAWQTERLKALATGPLDAWQVPVRPELVVEVAFDGIQASPRYPGGLALRFARVKRYREDKRPEDADTIETVRGLYGG</sequence>
<gene>
    <name evidence="1" type="primary">lig</name>
    <name type="ordered locus">AnaeK_4290</name>
</gene>
<organism>
    <name type="scientific">Anaeromyxobacter sp. (strain K)</name>
    <dbReference type="NCBI Taxonomy" id="447217"/>
    <lineage>
        <taxon>Bacteria</taxon>
        <taxon>Pseudomonadati</taxon>
        <taxon>Myxococcota</taxon>
        <taxon>Myxococcia</taxon>
        <taxon>Myxococcales</taxon>
        <taxon>Cystobacterineae</taxon>
        <taxon>Anaeromyxobacteraceae</taxon>
        <taxon>Anaeromyxobacter</taxon>
    </lineage>
</organism>